<protein>
    <recommendedName>
        <fullName evidence="1">Translation initiation factor IF-1</fullName>
    </recommendedName>
</protein>
<sequence>MSKQDVIELEGVVKEALPNAMFIVTLENGHEVLGHISGKLRMNFIRILPGDKVTVELSPYDLSRGRITWRKK</sequence>
<evidence type="ECO:0000255" key="1">
    <source>
        <dbReference type="HAMAP-Rule" id="MF_00075"/>
    </source>
</evidence>
<name>IF1_ALKOO</name>
<accession>A8MLG4</accession>
<gene>
    <name evidence="1" type="primary">infA</name>
    <name type="ordered locus">Clos_0516</name>
</gene>
<reference key="1">
    <citation type="submission" date="2007-10" db="EMBL/GenBank/DDBJ databases">
        <title>Complete genome of Alkaliphilus oremlandii OhILAs.</title>
        <authorList>
            <person name="Copeland A."/>
            <person name="Lucas S."/>
            <person name="Lapidus A."/>
            <person name="Barry K."/>
            <person name="Detter J.C."/>
            <person name="Glavina del Rio T."/>
            <person name="Hammon N."/>
            <person name="Israni S."/>
            <person name="Dalin E."/>
            <person name="Tice H."/>
            <person name="Pitluck S."/>
            <person name="Chain P."/>
            <person name="Malfatti S."/>
            <person name="Shin M."/>
            <person name="Vergez L."/>
            <person name="Schmutz J."/>
            <person name="Larimer F."/>
            <person name="Land M."/>
            <person name="Hauser L."/>
            <person name="Kyrpides N."/>
            <person name="Mikhailova N."/>
            <person name="Stolz J.F."/>
            <person name="Dawson A."/>
            <person name="Fisher E."/>
            <person name="Crable B."/>
            <person name="Perera E."/>
            <person name="Lisak J."/>
            <person name="Ranganathan M."/>
            <person name="Basu P."/>
            <person name="Richardson P."/>
        </authorList>
    </citation>
    <scope>NUCLEOTIDE SEQUENCE [LARGE SCALE GENOMIC DNA]</scope>
    <source>
        <strain>OhILAs</strain>
    </source>
</reference>
<feature type="chain" id="PRO_0000338757" description="Translation initiation factor IF-1">
    <location>
        <begin position="1"/>
        <end position="72"/>
    </location>
</feature>
<feature type="domain" description="S1-like" evidence="1">
    <location>
        <begin position="1"/>
        <end position="72"/>
    </location>
</feature>
<organism>
    <name type="scientific">Alkaliphilus oremlandii (strain OhILAs)</name>
    <name type="common">Clostridium oremlandii (strain OhILAs)</name>
    <dbReference type="NCBI Taxonomy" id="350688"/>
    <lineage>
        <taxon>Bacteria</taxon>
        <taxon>Bacillati</taxon>
        <taxon>Bacillota</taxon>
        <taxon>Clostridia</taxon>
        <taxon>Peptostreptococcales</taxon>
        <taxon>Natronincolaceae</taxon>
        <taxon>Alkaliphilus</taxon>
    </lineage>
</organism>
<keyword id="KW-0963">Cytoplasm</keyword>
<keyword id="KW-0396">Initiation factor</keyword>
<keyword id="KW-0648">Protein biosynthesis</keyword>
<keyword id="KW-1185">Reference proteome</keyword>
<keyword id="KW-0694">RNA-binding</keyword>
<keyword id="KW-0699">rRNA-binding</keyword>
<comment type="function">
    <text evidence="1">One of the essential components for the initiation of protein synthesis. Stabilizes the binding of IF-2 and IF-3 on the 30S subunit to which N-formylmethionyl-tRNA(fMet) subsequently binds. Helps modulate mRNA selection, yielding the 30S pre-initiation complex (PIC). Upon addition of the 50S ribosomal subunit IF-1, IF-2 and IF-3 are released leaving the mature 70S translation initiation complex.</text>
</comment>
<comment type="subunit">
    <text evidence="1">Component of the 30S ribosomal translation pre-initiation complex which assembles on the 30S ribosome in the order IF-2 and IF-3, IF-1 and N-formylmethionyl-tRNA(fMet); mRNA recruitment can occur at any time during PIC assembly.</text>
</comment>
<comment type="subcellular location">
    <subcellularLocation>
        <location evidence="1">Cytoplasm</location>
    </subcellularLocation>
</comment>
<comment type="similarity">
    <text evidence="1">Belongs to the IF-1 family.</text>
</comment>
<proteinExistence type="inferred from homology"/>
<dbReference type="EMBL" id="CP000853">
    <property type="protein sequence ID" value="ABW18078.1"/>
    <property type="molecule type" value="Genomic_DNA"/>
</dbReference>
<dbReference type="RefSeq" id="WP_012158392.1">
    <property type="nucleotide sequence ID" value="NC_009922.1"/>
</dbReference>
<dbReference type="SMR" id="A8MLG4"/>
<dbReference type="STRING" id="350688.Clos_0516"/>
<dbReference type="KEGG" id="aoe:Clos_0516"/>
<dbReference type="eggNOG" id="COG0361">
    <property type="taxonomic scope" value="Bacteria"/>
</dbReference>
<dbReference type="HOGENOM" id="CLU_151267_1_0_9"/>
<dbReference type="OrthoDB" id="9803250at2"/>
<dbReference type="Proteomes" id="UP000000269">
    <property type="component" value="Chromosome"/>
</dbReference>
<dbReference type="GO" id="GO:0005829">
    <property type="term" value="C:cytosol"/>
    <property type="evidence" value="ECO:0007669"/>
    <property type="project" value="TreeGrafter"/>
</dbReference>
<dbReference type="GO" id="GO:0043022">
    <property type="term" value="F:ribosome binding"/>
    <property type="evidence" value="ECO:0007669"/>
    <property type="project" value="UniProtKB-UniRule"/>
</dbReference>
<dbReference type="GO" id="GO:0019843">
    <property type="term" value="F:rRNA binding"/>
    <property type="evidence" value="ECO:0007669"/>
    <property type="project" value="UniProtKB-UniRule"/>
</dbReference>
<dbReference type="GO" id="GO:0003743">
    <property type="term" value="F:translation initiation factor activity"/>
    <property type="evidence" value="ECO:0007669"/>
    <property type="project" value="UniProtKB-UniRule"/>
</dbReference>
<dbReference type="CDD" id="cd04451">
    <property type="entry name" value="S1_IF1"/>
    <property type="match status" value="1"/>
</dbReference>
<dbReference type="FunFam" id="2.40.50.140:FF:000002">
    <property type="entry name" value="Translation initiation factor IF-1"/>
    <property type="match status" value="1"/>
</dbReference>
<dbReference type="Gene3D" id="2.40.50.140">
    <property type="entry name" value="Nucleic acid-binding proteins"/>
    <property type="match status" value="1"/>
</dbReference>
<dbReference type="HAMAP" id="MF_00075">
    <property type="entry name" value="IF_1"/>
    <property type="match status" value="1"/>
</dbReference>
<dbReference type="InterPro" id="IPR012340">
    <property type="entry name" value="NA-bd_OB-fold"/>
</dbReference>
<dbReference type="InterPro" id="IPR006196">
    <property type="entry name" value="RNA-binding_domain_S1_IF1"/>
</dbReference>
<dbReference type="InterPro" id="IPR003029">
    <property type="entry name" value="S1_domain"/>
</dbReference>
<dbReference type="InterPro" id="IPR004368">
    <property type="entry name" value="TIF_IF1"/>
</dbReference>
<dbReference type="NCBIfam" id="TIGR00008">
    <property type="entry name" value="infA"/>
    <property type="match status" value="1"/>
</dbReference>
<dbReference type="PANTHER" id="PTHR33370">
    <property type="entry name" value="TRANSLATION INITIATION FACTOR IF-1, CHLOROPLASTIC"/>
    <property type="match status" value="1"/>
</dbReference>
<dbReference type="PANTHER" id="PTHR33370:SF1">
    <property type="entry name" value="TRANSLATION INITIATION FACTOR IF-1, CHLOROPLASTIC"/>
    <property type="match status" value="1"/>
</dbReference>
<dbReference type="Pfam" id="PF01176">
    <property type="entry name" value="eIF-1a"/>
    <property type="match status" value="1"/>
</dbReference>
<dbReference type="SMART" id="SM00316">
    <property type="entry name" value="S1"/>
    <property type="match status" value="1"/>
</dbReference>
<dbReference type="SUPFAM" id="SSF50249">
    <property type="entry name" value="Nucleic acid-binding proteins"/>
    <property type="match status" value="1"/>
</dbReference>
<dbReference type="PROSITE" id="PS50832">
    <property type="entry name" value="S1_IF1_TYPE"/>
    <property type="match status" value="1"/>
</dbReference>